<name>ASTD_ALIF1</name>
<accession>Q5E2G9</accession>
<feature type="chain" id="PRO_0000262432" description="N-succinylglutamate 5-semialdehyde dehydrogenase">
    <location>
        <begin position="1"/>
        <end position="485"/>
    </location>
</feature>
<feature type="active site" evidence="1">
    <location>
        <position position="243"/>
    </location>
</feature>
<feature type="active site" evidence="1">
    <location>
        <position position="278"/>
    </location>
</feature>
<feature type="binding site" evidence="1">
    <location>
        <begin position="220"/>
        <end position="225"/>
    </location>
    <ligand>
        <name>NAD(+)</name>
        <dbReference type="ChEBI" id="CHEBI:57540"/>
    </ligand>
</feature>
<dbReference type="EC" id="1.2.1.71" evidence="1"/>
<dbReference type="EMBL" id="CP000020">
    <property type="protein sequence ID" value="AAW86777.1"/>
    <property type="molecule type" value="Genomic_DNA"/>
</dbReference>
<dbReference type="RefSeq" id="WP_011262692.1">
    <property type="nucleotide sequence ID" value="NC_006840.2"/>
</dbReference>
<dbReference type="RefSeq" id="YP_205665.1">
    <property type="nucleotide sequence ID" value="NC_006840.2"/>
</dbReference>
<dbReference type="SMR" id="Q5E2G9"/>
<dbReference type="STRING" id="312309.VF_2282"/>
<dbReference type="EnsemblBacteria" id="AAW86777">
    <property type="protein sequence ID" value="AAW86777"/>
    <property type="gene ID" value="VF_2282"/>
</dbReference>
<dbReference type="GeneID" id="54164997"/>
<dbReference type="KEGG" id="vfi:VF_2282"/>
<dbReference type="PATRIC" id="fig|312309.11.peg.2320"/>
<dbReference type="eggNOG" id="COG1012">
    <property type="taxonomic scope" value="Bacteria"/>
</dbReference>
<dbReference type="HOGENOM" id="CLU_005391_1_0_6"/>
<dbReference type="OrthoDB" id="9812625at2"/>
<dbReference type="UniPathway" id="UPA00185">
    <property type="reaction ID" value="UER00282"/>
</dbReference>
<dbReference type="Proteomes" id="UP000000537">
    <property type="component" value="Chromosome I"/>
</dbReference>
<dbReference type="GO" id="GO:0043824">
    <property type="term" value="F:succinylglutamate-semialdehyde dehydrogenase activity"/>
    <property type="evidence" value="ECO:0007669"/>
    <property type="project" value="UniProtKB-EC"/>
</dbReference>
<dbReference type="GO" id="GO:0019544">
    <property type="term" value="P:arginine catabolic process to glutamate"/>
    <property type="evidence" value="ECO:0007669"/>
    <property type="project" value="UniProtKB-UniRule"/>
</dbReference>
<dbReference type="GO" id="GO:0019545">
    <property type="term" value="P:arginine catabolic process to succinate"/>
    <property type="evidence" value="ECO:0007669"/>
    <property type="project" value="UniProtKB-UniRule"/>
</dbReference>
<dbReference type="CDD" id="cd07095">
    <property type="entry name" value="ALDH_SGSD_AstD"/>
    <property type="match status" value="1"/>
</dbReference>
<dbReference type="FunFam" id="3.40.605.10:FF:000010">
    <property type="entry name" value="N-succinylglutamate 5-semialdehyde dehydrogenase"/>
    <property type="match status" value="1"/>
</dbReference>
<dbReference type="Gene3D" id="3.40.605.10">
    <property type="entry name" value="Aldehyde Dehydrogenase, Chain A, domain 1"/>
    <property type="match status" value="1"/>
</dbReference>
<dbReference type="Gene3D" id="3.40.309.10">
    <property type="entry name" value="Aldehyde Dehydrogenase, Chain A, domain 2"/>
    <property type="match status" value="1"/>
</dbReference>
<dbReference type="HAMAP" id="MF_01174">
    <property type="entry name" value="Aldedh_AstD"/>
    <property type="match status" value="1"/>
</dbReference>
<dbReference type="InterPro" id="IPR016161">
    <property type="entry name" value="Ald_DH/histidinol_DH"/>
</dbReference>
<dbReference type="InterPro" id="IPR016163">
    <property type="entry name" value="Ald_DH_C"/>
</dbReference>
<dbReference type="InterPro" id="IPR016160">
    <property type="entry name" value="Ald_DH_CS_CYS"/>
</dbReference>
<dbReference type="InterPro" id="IPR029510">
    <property type="entry name" value="Ald_DH_CS_GLU"/>
</dbReference>
<dbReference type="InterPro" id="IPR016162">
    <property type="entry name" value="Ald_DH_N"/>
</dbReference>
<dbReference type="InterPro" id="IPR015590">
    <property type="entry name" value="Aldehyde_DH_dom"/>
</dbReference>
<dbReference type="InterPro" id="IPR017649">
    <property type="entry name" value="SuccinylGlu_semiald_DH_AstD"/>
</dbReference>
<dbReference type="NCBIfam" id="TIGR03240">
    <property type="entry name" value="arg_catab_astD"/>
    <property type="match status" value="1"/>
</dbReference>
<dbReference type="NCBIfam" id="NF006992">
    <property type="entry name" value="PRK09457.1"/>
    <property type="match status" value="1"/>
</dbReference>
<dbReference type="PANTHER" id="PTHR11699">
    <property type="entry name" value="ALDEHYDE DEHYDROGENASE-RELATED"/>
    <property type="match status" value="1"/>
</dbReference>
<dbReference type="Pfam" id="PF00171">
    <property type="entry name" value="Aldedh"/>
    <property type="match status" value="1"/>
</dbReference>
<dbReference type="SUPFAM" id="SSF53720">
    <property type="entry name" value="ALDH-like"/>
    <property type="match status" value="1"/>
</dbReference>
<dbReference type="PROSITE" id="PS00070">
    <property type="entry name" value="ALDEHYDE_DEHYDR_CYS"/>
    <property type="match status" value="1"/>
</dbReference>
<dbReference type="PROSITE" id="PS00687">
    <property type="entry name" value="ALDEHYDE_DEHYDR_GLU"/>
    <property type="match status" value="1"/>
</dbReference>
<protein>
    <recommendedName>
        <fullName evidence="1">N-succinylglutamate 5-semialdehyde dehydrogenase</fullName>
        <ecNumber evidence="1">1.2.1.71</ecNumber>
    </recommendedName>
    <alternativeName>
        <fullName evidence="1">Succinylglutamic semialdehyde dehydrogenase</fullName>
        <shortName evidence="1">SGSD</shortName>
    </alternativeName>
</protein>
<organism>
    <name type="scientific">Aliivibrio fischeri (strain ATCC 700601 / ES114)</name>
    <name type="common">Vibrio fischeri</name>
    <dbReference type="NCBI Taxonomy" id="312309"/>
    <lineage>
        <taxon>Bacteria</taxon>
        <taxon>Pseudomonadati</taxon>
        <taxon>Pseudomonadota</taxon>
        <taxon>Gammaproteobacteria</taxon>
        <taxon>Vibrionales</taxon>
        <taxon>Vibrionaceae</taxon>
        <taxon>Aliivibrio</taxon>
    </lineage>
</organism>
<sequence length="485" mass="52319">MTHWIAGDWVLGEGETIQSLSPYNSEVVWKGESATEAQVESAVNAARNAFIEWKKLPFENRQAIVERFAELVKENADSIAEVIAKETGKPFWETKTEAGAMVGKIAISIRAYHERTPYKEREAAGNKIVLRHRPLGVMAVFGPYNFPGHLPNGHIVPALLAGNTVVLKPSEQTPWTSEVIMKLWQKSGLPKGVINLVQGARATGEALANTKGIDGLLFTGSANTGHILHRQFAGDTGKMLALEMGGNNPMVISKAFGDLDATVYTIVQSAFISAGQRCTCARRLYVPEGKQGDALLARLVDVTKNIHVDQPFSETTPFMGPQISIAAAEFILNAQKKLQALGGESLLEARSLGHAFVSPGIIDATNVAELPDEEYFGPLLQVIRYTTLAQAVELANDTRYGLSAGLVSTDDSEWDYFVEHIRSGIVNRNRQLTGASGDAPFGGPGASGNLKPSAYYAADYCAYPMASMEGDACEIPEQLSPGLTL</sequence>
<keyword id="KW-0056">Arginine metabolism</keyword>
<keyword id="KW-0520">NAD</keyword>
<keyword id="KW-0560">Oxidoreductase</keyword>
<keyword id="KW-1185">Reference proteome</keyword>
<proteinExistence type="inferred from homology"/>
<comment type="function">
    <text evidence="1">Catalyzes the NAD-dependent reduction of succinylglutamate semialdehyde into succinylglutamate.</text>
</comment>
<comment type="catalytic activity">
    <reaction evidence="1">
        <text>N-succinyl-L-glutamate 5-semialdehyde + NAD(+) + H2O = N-succinyl-L-glutamate + NADH + 2 H(+)</text>
        <dbReference type="Rhea" id="RHEA:10812"/>
        <dbReference type="ChEBI" id="CHEBI:15377"/>
        <dbReference type="ChEBI" id="CHEBI:15378"/>
        <dbReference type="ChEBI" id="CHEBI:57540"/>
        <dbReference type="ChEBI" id="CHEBI:57945"/>
        <dbReference type="ChEBI" id="CHEBI:58520"/>
        <dbReference type="ChEBI" id="CHEBI:58763"/>
        <dbReference type="EC" id="1.2.1.71"/>
    </reaction>
</comment>
<comment type="pathway">
    <text evidence="1">Amino-acid degradation; L-arginine degradation via AST pathway; L-glutamate and succinate from L-arginine: step 4/5.</text>
</comment>
<comment type="similarity">
    <text evidence="1">Belongs to the aldehyde dehydrogenase family. AstD subfamily.</text>
</comment>
<reference key="1">
    <citation type="journal article" date="2005" name="Proc. Natl. Acad. Sci. U.S.A.">
        <title>Complete genome sequence of Vibrio fischeri: a symbiotic bacterium with pathogenic congeners.</title>
        <authorList>
            <person name="Ruby E.G."/>
            <person name="Urbanowski M."/>
            <person name="Campbell J."/>
            <person name="Dunn A."/>
            <person name="Faini M."/>
            <person name="Gunsalus R."/>
            <person name="Lostroh P."/>
            <person name="Lupp C."/>
            <person name="McCann J."/>
            <person name="Millikan D."/>
            <person name="Schaefer A."/>
            <person name="Stabb E."/>
            <person name="Stevens A."/>
            <person name="Visick K."/>
            <person name="Whistler C."/>
            <person name="Greenberg E.P."/>
        </authorList>
    </citation>
    <scope>NUCLEOTIDE SEQUENCE [LARGE SCALE GENOMIC DNA]</scope>
    <source>
        <strain>ATCC 700601 / ES114</strain>
    </source>
</reference>
<evidence type="ECO:0000255" key="1">
    <source>
        <dbReference type="HAMAP-Rule" id="MF_01174"/>
    </source>
</evidence>
<gene>
    <name evidence="1" type="primary">astD</name>
    <name type="ordered locus">VF_2282</name>
</gene>